<name>MURA1_BACC1</name>
<dbReference type="EC" id="2.5.1.7" evidence="1"/>
<dbReference type="EMBL" id="AE017194">
    <property type="protein sequence ID" value="AAS44312.1"/>
    <property type="molecule type" value="Genomic_DNA"/>
</dbReference>
<dbReference type="SMR" id="Q72XG6"/>
<dbReference type="KEGG" id="bca:BCE_5412"/>
<dbReference type="HOGENOM" id="CLU_027387_0_0_9"/>
<dbReference type="UniPathway" id="UPA00219"/>
<dbReference type="Proteomes" id="UP000002527">
    <property type="component" value="Chromosome"/>
</dbReference>
<dbReference type="GO" id="GO:0005737">
    <property type="term" value="C:cytoplasm"/>
    <property type="evidence" value="ECO:0007669"/>
    <property type="project" value="UniProtKB-SubCell"/>
</dbReference>
<dbReference type="GO" id="GO:0008760">
    <property type="term" value="F:UDP-N-acetylglucosamine 1-carboxyvinyltransferase activity"/>
    <property type="evidence" value="ECO:0007669"/>
    <property type="project" value="UniProtKB-UniRule"/>
</dbReference>
<dbReference type="GO" id="GO:0051301">
    <property type="term" value="P:cell division"/>
    <property type="evidence" value="ECO:0007669"/>
    <property type="project" value="UniProtKB-KW"/>
</dbReference>
<dbReference type="GO" id="GO:0071555">
    <property type="term" value="P:cell wall organization"/>
    <property type="evidence" value="ECO:0007669"/>
    <property type="project" value="UniProtKB-KW"/>
</dbReference>
<dbReference type="GO" id="GO:0009252">
    <property type="term" value="P:peptidoglycan biosynthetic process"/>
    <property type="evidence" value="ECO:0007669"/>
    <property type="project" value="UniProtKB-UniRule"/>
</dbReference>
<dbReference type="GO" id="GO:0008360">
    <property type="term" value="P:regulation of cell shape"/>
    <property type="evidence" value="ECO:0007669"/>
    <property type="project" value="UniProtKB-KW"/>
</dbReference>
<dbReference type="GO" id="GO:0019277">
    <property type="term" value="P:UDP-N-acetylgalactosamine biosynthetic process"/>
    <property type="evidence" value="ECO:0007669"/>
    <property type="project" value="InterPro"/>
</dbReference>
<dbReference type="CDD" id="cd01555">
    <property type="entry name" value="UdpNAET"/>
    <property type="match status" value="1"/>
</dbReference>
<dbReference type="FunFam" id="3.65.10.10:FF:000001">
    <property type="entry name" value="UDP-N-acetylglucosamine 1-carboxyvinyltransferase"/>
    <property type="match status" value="1"/>
</dbReference>
<dbReference type="Gene3D" id="3.65.10.10">
    <property type="entry name" value="Enolpyruvate transferase domain"/>
    <property type="match status" value="2"/>
</dbReference>
<dbReference type="HAMAP" id="MF_00111">
    <property type="entry name" value="MurA"/>
    <property type="match status" value="1"/>
</dbReference>
<dbReference type="InterPro" id="IPR001986">
    <property type="entry name" value="Enolpyruvate_Tfrase_dom"/>
</dbReference>
<dbReference type="InterPro" id="IPR036968">
    <property type="entry name" value="Enolpyruvate_Tfrase_sf"/>
</dbReference>
<dbReference type="InterPro" id="IPR050068">
    <property type="entry name" value="MurA_subfamily"/>
</dbReference>
<dbReference type="InterPro" id="IPR013792">
    <property type="entry name" value="RNA3'P_cycl/enolpyr_Trfase_a/b"/>
</dbReference>
<dbReference type="InterPro" id="IPR005750">
    <property type="entry name" value="UDP_GlcNAc_COvinyl_MurA"/>
</dbReference>
<dbReference type="NCBIfam" id="TIGR01072">
    <property type="entry name" value="murA"/>
    <property type="match status" value="1"/>
</dbReference>
<dbReference type="NCBIfam" id="NF006873">
    <property type="entry name" value="PRK09369.1"/>
    <property type="match status" value="1"/>
</dbReference>
<dbReference type="NCBIfam" id="NF009470">
    <property type="entry name" value="PRK12830.1"/>
    <property type="match status" value="1"/>
</dbReference>
<dbReference type="PANTHER" id="PTHR43783">
    <property type="entry name" value="UDP-N-ACETYLGLUCOSAMINE 1-CARBOXYVINYLTRANSFERASE"/>
    <property type="match status" value="1"/>
</dbReference>
<dbReference type="PANTHER" id="PTHR43783:SF1">
    <property type="entry name" value="UDP-N-ACETYLGLUCOSAMINE 1-CARBOXYVINYLTRANSFERASE"/>
    <property type="match status" value="1"/>
</dbReference>
<dbReference type="Pfam" id="PF00275">
    <property type="entry name" value="EPSP_synthase"/>
    <property type="match status" value="1"/>
</dbReference>
<dbReference type="SUPFAM" id="SSF55205">
    <property type="entry name" value="EPT/RTPC-like"/>
    <property type="match status" value="1"/>
</dbReference>
<feature type="chain" id="PRO_0000231155" description="UDP-N-acetylglucosamine 1-carboxyvinyltransferase 1">
    <location>
        <begin position="1"/>
        <end position="434"/>
    </location>
</feature>
<feature type="active site" description="Proton donor" evidence="1">
    <location>
        <position position="117"/>
    </location>
</feature>
<feature type="binding site" evidence="1">
    <location>
        <begin position="22"/>
        <end position="23"/>
    </location>
    <ligand>
        <name>phosphoenolpyruvate</name>
        <dbReference type="ChEBI" id="CHEBI:58702"/>
    </ligand>
</feature>
<feature type="binding site" evidence="1">
    <location>
        <position position="93"/>
    </location>
    <ligand>
        <name>UDP-N-acetyl-alpha-D-glucosamine</name>
        <dbReference type="ChEBI" id="CHEBI:57705"/>
    </ligand>
</feature>
<feature type="binding site" evidence="1">
    <location>
        <begin position="122"/>
        <end position="126"/>
    </location>
    <ligand>
        <name>UDP-N-acetyl-alpha-D-glucosamine</name>
        <dbReference type="ChEBI" id="CHEBI:57705"/>
    </ligand>
</feature>
<feature type="binding site" evidence="1">
    <location>
        <position position="306"/>
    </location>
    <ligand>
        <name>UDP-N-acetyl-alpha-D-glucosamine</name>
        <dbReference type="ChEBI" id="CHEBI:57705"/>
    </ligand>
</feature>
<feature type="binding site" evidence="1">
    <location>
        <position position="328"/>
    </location>
    <ligand>
        <name>UDP-N-acetyl-alpha-D-glucosamine</name>
        <dbReference type="ChEBI" id="CHEBI:57705"/>
    </ligand>
</feature>
<feature type="modified residue" description="2-(S-cysteinyl)pyruvic acid O-phosphothioketal" evidence="1">
    <location>
        <position position="117"/>
    </location>
</feature>
<protein>
    <recommendedName>
        <fullName evidence="1">UDP-N-acetylglucosamine 1-carboxyvinyltransferase 1</fullName>
        <ecNumber evidence="1">2.5.1.7</ecNumber>
    </recommendedName>
    <alternativeName>
        <fullName evidence="1">Enoylpyruvate transferase 1</fullName>
    </alternativeName>
    <alternativeName>
        <fullName evidence="1">UDP-N-acetylglucosamine enolpyruvyl transferase 1</fullName>
        <shortName evidence="1">EPT 1</shortName>
    </alternativeName>
</protein>
<organism>
    <name type="scientific">Bacillus cereus (strain ATCC 10987 / NRS 248)</name>
    <dbReference type="NCBI Taxonomy" id="222523"/>
    <lineage>
        <taxon>Bacteria</taxon>
        <taxon>Bacillati</taxon>
        <taxon>Bacillota</taxon>
        <taxon>Bacilli</taxon>
        <taxon>Bacillales</taxon>
        <taxon>Bacillaceae</taxon>
        <taxon>Bacillus</taxon>
        <taxon>Bacillus cereus group</taxon>
    </lineage>
</organism>
<comment type="function">
    <text evidence="1">Cell wall formation. Adds enolpyruvyl to UDP-N-acetylglucosamine.</text>
</comment>
<comment type="catalytic activity">
    <reaction evidence="1">
        <text>phosphoenolpyruvate + UDP-N-acetyl-alpha-D-glucosamine = UDP-N-acetyl-3-O-(1-carboxyvinyl)-alpha-D-glucosamine + phosphate</text>
        <dbReference type="Rhea" id="RHEA:18681"/>
        <dbReference type="ChEBI" id="CHEBI:43474"/>
        <dbReference type="ChEBI" id="CHEBI:57705"/>
        <dbReference type="ChEBI" id="CHEBI:58702"/>
        <dbReference type="ChEBI" id="CHEBI:68483"/>
        <dbReference type="EC" id="2.5.1.7"/>
    </reaction>
</comment>
<comment type="pathway">
    <text evidence="1">Cell wall biogenesis; peptidoglycan biosynthesis.</text>
</comment>
<comment type="subcellular location">
    <subcellularLocation>
        <location evidence="1">Cytoplasm</location>
    </subcellularLocation>
</comment>
<comment type="similarity">
    <text evidence="1">Belongs to the EPSP synthase family. MurA subfamily.</text>
</comment>
<gene>
    <name evidence="1" type="primary">murA1</name>
    <name type="ordered locus">BCE_5412</name>
</gene>
<evidence type="ECO:0000255" key="1">
    <source>
        <dbReference type="HAMAP-Rule" id="MF_00111"/>
    </source>
</evidence>
<sequence>MEKIIVRGGKRLNGTVRVEGAKNAVLPIIAAALLASDGKNVLSEVPVLSDVYTINEVLRHLNAEVVFENNQVTIDASKELNIEAPFEYVRKMRASVQVMGPLLARNGRARIALPGGCAIGSRPIDQHLKGFEAMGAKVQVGNGFVEAYVEGELKGAKIYLDFPSVGATENIMSAATLAKGTTILENAAKEPEIVDLANFLNAMGAKVRGAGTGTIRIEGVDKLYGANHSIIPDRIEAGTFMVAAAITGGDILIENAVPEHLRSITAKMEEMGVKIIEENEGVRVIGPDKLKAVDIKTMPHPGFPTDMQSQMMALLLQADGTSMITETVFENRFMHVEEFRRMNADIKIEGRSVIMNGPNSLQGAEVAATDLRAAAALILAGLVSEGYTRVTELKHLDRGYVNFHKKLAALGATIERVNEKVEEVKEQEVSDLHA</sequence>
<accession>Q72XG6</accession>
<keyword id="KW-0131">Cell cycle</keyword>
<keyword id="KW-0132">Cell division</keyword>
<keyword id="KW-0133">Cell shape</keyword>
<keyword id="KW-0961">Cell wall biogenesis/degradation</keyword>
<keyword id="KW-0963">Cytoplasm</keyword>
<keyword id="KW-0573">Peptidoglycan synthesis</keyword>
<keyword id="KW-0670">Pyruvate</keyword>
<keyword id="KW-0808">Transferase</keyword>
<proteinExistence type="inferred from homology"/>
<reference key="1">
    <citation type="journal article" date="2004" name="Nucleic Acids Res.">
        <title>The genome sequence of Bacillus cereus ATCC 10987 reveals metabolic adaptations and a large plasmid related to Bacillus anthracis pXO1.</title>
        <authorList>
            <person name="Rasko D.A."/>
            <person name="Ravel J."/>
            <person name="Oekstad O.A."/>
            <person name="Helgason E."/>
            <person name="Cer R.Z."/>
            <person name="Jiang L."/>
            <person name="Shores K.A."/>
            <person name="Fouts D.E."/>
            <person name="Tourasse N.J."/>
            <person name="Angiuoli S.V."/>
            <person name="Kolonay J.F."/>
            <person name="Nelson W.C."/>
            <person name="Kolstoe A.-B."/>
            <person name="Fraser C.M."/>
            <person name="Read T.D."/>
        </authorList>
    </citation>
    <scope>NUCLEOTIDE SEQUENCE [LARGE SCALE GENOMIC DNA]</scope>
    <source>
        <strain>ATCC 10987 / NRS 248</strain>
    </source>
</reference>